<sequence length="809" mass="90615">MDHKEVVLLLLLFLKSGLGDSLDDYVNTQGAFLFSLSRKQVAARSVEECAAKCEAETNFICRAFQYHSKDQQCVVMAENSKTSPIARMRDVVLFEKRIYLSECKTGNGKNYRGTTSKTKSGVICQKWSVSSPHIPKYSPEKFPLAGLEENYCRNPDNDEKGPWCYTTDPETRFDYCDIPECEDECMHCSGEHYEGKISKTMSGIECQSWGSQSPHAHGYLPSKFPNKNLKMNYCRNPDGEPRPWCFTTDPNKRWEFCDIPRCTTPPPTSGPTYQCLKGRGENYRGTVSVTASGHTCQRWSAQSPHKHNRTPENFPCKNLEENYCRNPDGETAPWCYTTDSEVRWDYCKIPSCGSSTTSTEYLDAPVPPEQTPVAQDCYRGNGESYRGTSSTTITGRKCQSWVSMTPHRHEKTPGNFPNAGLTMNYCRNPDADKSPWCYTTDPRVRWEYCNLKKCSETEQQVTNFPAIAQVPSVEDLSEDCMFGNGKRYRGKRATTVAGVPCQEWAAQEPHRHSIFTPETNPRAGLEKNYCRNPDGDDNGPWCYTTNPQKLFDYCDVPQCVTSSFDCGKPKVEPKKCPARVVGGCVSIPHSWPWQISLRHRYGGHFCGGTLISPEWVLTAKHCLEKSSSPSSYKVILGAHEEYHLGEGVQEIDVSKLFKEPSEADIALLKLSSPAIITDKVIPACLPTPNYVVADRTACYITGWGETKGTYGAGLLKEARLPVIENKVCNRYEYLGGKVSPNELCAGHLAGGIDSCQGDSGGPLVCFEKDKYILQGVTSWGLGCALPNKPGVYVRVSRFVTWIEEIMRRN</sequence>
<protein>
    <recommendedName>
        <fullName>Plasminogen</fullName>
        <ecNumber>3.4.21.7</ecNumber>
    </recommendedName>
    <component>
        <recommendedName>
            <fullName>Plasmin heavy chain A</fullName>
        </recommendedName>
    </component>
    <component>
        <recommendedName>
            <fullName>Activation peptide</fullName>
        </recommendedName>
    </component>
    <component>
        <recommendedName>
            <fullName>Plasmin heavy chain A, short form</fullName>
        </recommendedName>
    </component>
    <component>
        <recommendedName>
            <fullName>Plasmin light chain B</fullName>
        </recommendedName>
    </component>
</protein>
<feature type="signal peptide" evidence="7">
    <location>
        <begin position="1"/>
        <end position="19"/>
    </location>
</feature>
<feature type="chain" id="PRO_0000285882" description="Plasminogen">
    <location>
        <begin position="20"/>
        <end position="809"/>
    </location>
</feature>
<feature type="chain" id="PRO_0000028075" description="Plasmin heavy chain A">
    <location>
        <begin position="20"/>
        <end position="579"/>
    </location>
</feature>
<feature type="peptide" id="PRO_0000028076" description="Activation peptide" evidence="1">
    <location>
        <begin position="20"/>
        <end position="97"/>
    </location>
</feature>
<feature type="chain" id="PRO_0000028077" description="Plasmin heavy chain A, short form">
    <location>
        <begin position="98"/>
        <end position="579"/>
    </location>
</feature>
<feature type="chain" id="PRO_0000028078" description="Plasmin light chain B">
    <location>
        <begin position="580"/>
        <end position="809"/>
    </location>
</feature>
<feature type="domain" description="PAN" evidence="5">
    <location>
        <begin position="20"/>
        <end position="98"/>
    </location>
</feature>
<feature type="domain" description="Kringle 1" evidence="3">
    <location>
        <begin position="103"/>
        <end position="181"/>
    </location>
</feature>
<feature type="domain" description="Kringle 2" evidence="3">
    <location>
        <begin position="185"/>
        <end position="262"/>
    </location>
</feature>
<feature type="domain" description="Kringle 3" evidence="3">
    <location>
        <begin position="275"/>
        <end position="352"/>
    </location>
</feature>
<feature type="domain" description="Kringle 4" evidence="3">
    <location>
        <begin position="377"/>
        <end position="454"/>
    </location>
</feature>
<feature type="domain" description="Kringle 5" evidence="3">
    <location>
        <begin position="480"/>
        <end position="559"/>
    </location>
</feature>
<feature type="domain" description="Peptidase S1" evidence="4">
    <location>
        <begin position="580"/>
        <end position="807"/>
    </location>
</feature>
<feature type="active site" description="Charge relay system">
    <location>
        <position position="621"/>
    </location>
</feature>
<feature type="active site" description="Charge relay system">
    <location>
        <position position="664"/>
    </location>
</feature>
<feature type="active site" description="Charge relay system">
    <location>
        <position position="759"/>
    </location>
</feature>
<feature type="modified residue" description="Phosphoserine" evidence="2">
    <location>
        <position position="596"/>
    </location>
</feature>
<feature type="glycosylation site" id="CAR_000020" description="O-linked (GalNAc...) threonine" evidence="6">
    <location>
        <position position="268"/>
    </location>
</feature>
<feature type="glycosylation site" id="CAR_000019" description="N-linked (GlcNAc...) asparagine" evidence="6">
    <location>
        <position position="308"/>
    </location>
</feature>
<feature type="disulfide bond" evidence="1">
    <location>
        <begin position="49"/>
        <end position="73"/>
    </location>
</feature>
<feature type="disulfide bond" evidence="1">
    <location>
        <begin position="53"/>
        <end position="61"/>
    </location>
</feature>
<feature type="disulfide bond" evidence="1">
    <location>
        <begin position="103"/>
        <end position="181"/>
    </location>
</feature>
<feature type="disulfide bond" evidence="1">
    <location>
        <begin position="124"/>
        <end position="164"/>
    </location>
</feature>
<feature type="disulfide bond" evidence="1">
    <location>
        <begin position="152"/>
        <end position="176"/>
    </location>
</feature>
<feature type="disulfide bond" evidence="1">
    <location>
        <begin position="185"/>
        <end position="262"/>
    </location>
</feature>
<feature type="disulfide bond" evidence="1">
    <location>
        <begin position="188"/>
        <end position="316"/>
    </location>
</feature>
<feature type="disulfide bond" evidence="1">
    <location>
        <begin position="206"/>
        <end position="245"/>
    </location>
</feature>
<feature type="disulfide bond" evidence="1">
    <location>
        <begin position="234"/>
        <end position="257"/>
    </location>
</feature>
<feature type="disulfide bond" evidence="1">
    <location>
        <begin position="275"/>
        <end position="352"/>
    </location>
</feature>
<feature type="disulfide bond" evidence="1">
    <location>
        <begin position="296"/>
        <end position="335"/>
    </location>
</feature>
<feature type="disulfide bond" evidence="1">
    <location>
        <begin position="324"/>
        <end position="347"/>
    </location>
</feature>
<feature type="disulfide bond" evidence="1">
    <location>
        <begin position="377"/>
        <end position="454"/>
    </location>
</feature>
<feature type="disulfide bond" evidence="1">
    <location>
        <begin position="398"/>
        <end position="437"/>
    </location>
</feature>
<feature type="disulfide bond" evidence="1">
    <location>
        <begin position="426"/>
        <end position="449"/>
    </location>
</feature>
<feature type="disulfide bond" evidence="1">
    <location>
        <begin position="480"/>
        <end position="559"/>
    </location>
</feature>
<feature type="disulfide bond" evidence="1">
    <location>
        <begin position="501"/>
        <end position="542"/>
    </location>
</feature>
<feature type="disulfide bond" evidence="1">
    <location>
        <begin position="530"/>
        <end position="554"/>
    </location>
</feature>
<feature type="disulfide bond" description="Interchain (between A and B chains)" evidence="1">
    <location>
        <begin position="566"/>
        <end position="684"/>
    </location>
</feature>
<feature type="disulfide bond" description="Interchain (between A and B chains)" evidence="1">
    <location>
        <begin position="576"/>
        <end position="584"/>
    </location>
</feature>
<feature type="disulfide bond" evidence="1">
    <location>
        <begin position="606"/>
        <end position="622"/>
    </location>
</feature>
<feature type="disulfide bond" evidence="1">
    <location>
        <begin position="698"/>
        <end position="765"/>
    </location>
</feature>
<feature type="disulfide bond" evidence="1">
    <location>
        <begin position="728"/>
        <end position="744"/>
    </location>
</feature>
<feature type="disulfide bond" evidence="1">
    <location>
        <begin position="755"/>
        <end position="783"/>
    </location>
</feature>
<feature type="sequence conflict" description="In Ref. 2; AA sequence." evidence="8" ref="2">
    <original>Y</original>
    <variation>H</variation>
    <location>
        <position position="361"/>
    </location>
</feature>
<feature type="sequence conflict" description="In Ref. 3; AA sequence." evidence="8" ref="3">
    <original>H</original>
    <variation>Y</variation>
    <location>
        <position position="599"/>
    </location>
</feature>
<feature type="sequence conflict" description="In Ref. 3; AA sequence." evidence="8" ref="3">
    <original>G</original>
    <variation>R</variation>
    <location>
        <position position="602"/>
    </location>
</feature>
<feature type="sequence conflict" description="In Ref. 3; AA sequence." evidence="8" ref="3">
    <original>I</original>
    <variation>V</variation>
    <location>
        <position position="675"/>
    </location>
</feature>
<keyword id="KW-0094">Blood coagulation</keyword>
<keyword id="KW-0165">Cleavage on pair of basic residues</keyword>
<keyword id="KW-0903">Direct protein sequencing</keyword>
<keyword id="KW-1015">Disulfide bond</keyword>
<keyword id="KW-0280">Fibrinolysis</keyword>
<keyword id="KW-0325">Glycoprotein</keyword>
<keyword id="KW-0356">Hemostasis</keyword>
<keyword id="KW-0378">Hydrolase</keyword>
<keyword id="KW-0420">Kringle</keyword>
<keyword id="KW-0597">Phosphoprotein</keyword>
<keyword id="KW-0645">Protease</keyword>
<keyword id="KW-1185">Reference proteome</keyword>
<keyword id="KW-0677">Repeat</keyword>
<keyword id="KW-0964">Secreted</keyword>
<keyword id="KW-0720">Serine protease</keyword>
<keyword id="KW-0732">Signal</keyword>
<keyword id="KW-0797">Tissue remodeling</keyword>
<keyword id="KW-0865">Zymogen</keyword>
<comment type="function">
    <text evidence="1">Plasmin dissolves the fibrin of blood clots and acts as a proteolytic factor in a variety of other processes including embryonic development, tissue remodeling, tumor invasion, and inflammation. In ovulation, weakens the walls of the Graafian follicle. It activates the urokinase-type plasminogen activator, collagenases and several complement zymogens, such as C1, C4 and C5. Cleavage of fibronectin and laminin leads to cell detachment and apoptosis. Also cleaves fibrin, thrombospondin and von Willebrand factor. Its role in tissue remodeling and tumor invasion may be modulated by CSPG4. Binds to cells (By similarity).</text>
</comment>
<comment type="catalytic activity">
    <reaction>
        <text>Preferential cleavage: Lys-|-Xaa &gt; Arg-|-Xaa, higher selectivity than trypsin. Converts fibrin into soluble products.</text>
        <dbReference type="EC" id="3.4.21.7"/>
    </reaction>
</comment>
<comment type="activity regulation">
    <text>Converted into plasmin by plasminogen activators, both plasminogen and its activator being bound to fibrin. Cannot be activated with streptokinase.</text>
</comment>
<comment type="subunit">
    <text evidence="2">Interacts with CSPG4 and AMOT. Interacts (via the Kringle domains) with HRG; the interaction tethers PLG to the cell surface and enhances its activation. Interacts (via Kringle 4 domain) with ADA; the interaction stimulates PLG activation when in complex with DPP4. Angiostatin: Interacts with ATP5F1A; the interaction inhibits most of the angiogenic effects of angiostatin.</text>
</comment>
<comment type="subcellular location">
    <subcellularLocation>
        <location evidence="1">Secreted</location>
    </subcellularLocation>
    <text evidence="1">Locates to the cell surface where it is proteolytically cleaved to produce the active plasmin. Interaction with HRG tethers it to the cell surface (By similarity).</text>
</comment>
<comment type="domain">
    <text evidence="1">Kringle domains mediate interaction with CSPG4.</text>
</comment>
<comment type="PTM">
    <text evidence="6">N-linked glycan contains N-acetyllactosamine, sialic acid and is core fucosylated. O-linked glycans consist of Gal-GalNAc disaccharide which is modified with up to 2 sialic acid residues (microheterogeneity).</text>
</comment>
<comment type="PTM">
    <text evidence="1">In the presence of the inhibitor, the activation involves only cleavage after Arg-579, yielding two chains held together by two disulfide bonds. In the absence of the inhibitor, the activation involves additionally the removal of the activation peptide (By similarity).</text>
</comment>
<comment type="miscellaneous">
    <text>Plasmin is inactivated by alpha-2-antiplasmin immediately after dissociation from the clot.</text>
</comment>
<comment type="similarity">
    <text evidence="4">Belongs to the peptidase S1 family. Plasminogen subfamily.</text>
</comment>
<dbReference type="EC" id="3.4.21.7"/>
<dbReference type="EMBL" id="DQ530369">
    <property type="protein sequence ID" value="ABF82358.1"/>
    <property type="molecule type" value="mRNA"/>
</dbReference>
<dbReference type="PIR" id="S03733">
    <property type="entry name" value="PLPG"/>
</dbReference>
<dbReference type="RefSeq" id="NP_001038055.1">
    <property type="nucleotide sequence ID" value="NM_001044590.2"/>
</dbReference>
<dbReference type="SMR" id="P06867"/>
<dbReference type="FunCoup" id="P06867">
    <property type="interactions" value="131"/>
</dbReference>
<dbReference type="IntAct" id="P06867">
    <property type="interactions" value="1"/>
</dbReference>
<dbReference type="STRING" id="9823.ENSSSCP00000069662"/>
<dbReference type="MEROPS" id="S01.233"/>
<dbReference type="GlyConnect" id="501">
    <property type="glycosylation" value="12 N-Linked glycans (1 site), 2 O-Linked glycans (1 site)"/>
</dbReference>
<dbReference type="GlyCosmos" id="P06867">
    <property type="glycosylation" value="4 sites, 26 glycans"/>
</dbReference>
<dbReference type="GlyGen" id="P06867">
    <property type="glycosylation" value="2 sites"/>
</dbReference>
<dbReference type="PaxDb" id="9823-ENSSSCP00000004364"/>
<dbReference type="PeptideAtlas" id="P06867"/>
<dbReference type="GeneID" id="733660"/>
<dbReference type="KEGG" id="ssc:733660"/>
<dbReference type="CTD" id="5340"/>
<dbReference type="eggNOG" id="ENOG502QVNP">
    <property type="taxonomic scope" value="Eukaryota"/>
</dbReference>
<dbReference type="InParanoid" id="P06867"/>
<dbReference type="OrthoDB" id="41905at2759"/>
<dbReference type="SABIO-RK" id="P06867"/>
<dbReference type="Proteomes" id="UP000008227">
    <property type="component" value="Unplaced"/>
</dbReference>
<dbReference type="Proteomes" id="UP000314985">
    <property type="component" value="Unplaced"/>
</dbReference>
<dbReference type="Proteomes" id="UP000694570">
    <property type="component" value="Unplaced"/>
</dbReference>
<dbReference type="Proteomes" id="UP000694571">
    <property type="component" value="Unplaced"/>
</dbReference>
<dbReference type="Proteomes" id="UP000694720">
    <property type="component" value="Unplaced"/>
</dbReference>
<dbReference type="Proteomes" id="UP000694722">
    <property type="component" value="Unplaced"/>
</dbReference>
<dbReference type="Proteomes" id="UP000694723">
    <property type="component" value="Unplaced"/>
</dbReference>
<dbReference type="Proteomes" id="UP000694724">
    <property type="component" value="Unplaced"/>
</dbReference>
<dbReference type="Proteomes" id="UP000694725">
    <property type="component" value="Unplaced"/>
</dbReference>
<dbReference type="Proteomes" id="UP000694726">
    <property type="component" value="Unplaced"/>
</dbReference>
<dbReference type="Proteomes" id="UP000694727">
    <property type="component" value="Unplaced"/>
</dbReference>
<dbReference type="Proteomes" id="UP000694728">
    <property type="component" value="Unplaced"/>
</dbReference>
<dbReference type="GO" id="GO:0005615">
    <property type="term" value="C:extracellular space"/>
    <property type="evidence" value="ECO:0000318"/>
    <property type="project" value="GO_Central"/>
</dbReference>
<dbReference type="GO" id="GO:0004175">
    <property type="term" value="F:endopeptidase activity"/>
    <property type="evidence" value="ECO:0000318"/>
    <property type="project" value="GO_Central"/>
</dbReference>
<dbReference type="GO" id="GO:0004252">
    <property type="term" value="F:serine-type endopeptidase activity"/>
    <property type="evidence" value="ECO:0007669"/>
    <property type="project" value="UniProtKB-EC"/>
</dbReference>
<dbReference type="GO" id="GO:0005102">
    <property type="term" value="F:signaling receptor binding"/>
    <property type="evidence" value="ECO:0000318"/>
    <property type="project" value="GO_Central"/>
</dbReference>
<dbReference type="GO" id="GO:0007596">
    <property type="term" value="P:blood coagulation"/>
    <property type="evidence" value="ECO:0007669"/>
    <property type="project" value="UniProtKB-KW"/>
</dbReference>
<dbReference type="GO" id="GO:0042730">
    <property type="term" value="P:fibrinolysis"/>
    <property type="evidence" value="ECO:0007669"/>
    <property type="project" value="UniProtKB-KW"/>
</dbReference>
<dbReference type="GO" id="GO:0006508">
    <property type="term" value="P:proteolysis"/>
    <property type="evidence" value="ECO:0000318"/>
    <property type="project" value="GO_Central"/>
</dbReference>
<dbReference type="GO" id="GO:0048771">
    <property type="term" value="P:tissue remodeling"/>
    <property type="evidence" value="ECO:0007669"/>
    <property type="project" value="UniProtKB-KW"/>
</dbReference>
<dbReference type="CDD" id="cd00108">
    <property type="entry name" value="KR"/>
    <property type="match status" value="5"/>
</dbReference>
<dbReference type="CDD" id="cd01099">
    <property type="entry name" value="PAN_AP_HGF"/>
    <property type="match status" value="1"/>
</dbReference>
<dbReference type="CDD" id="cd00190">
    <property type="entry name" value="Tryp_SPc"/>
    <property type="match status" value="1"/>
</dbReference>
<dbReference type="FunFam" id="2.40.20.10:FF:000005">
    <property type="entry name" value="Plasminogen"/>
    <property type="match status" value="1"/>
</dbReference>
<dbReference type="FunFam" id="2.40.20.10:FF:000011">
    <property type="entry name" value="Plasminogen"/>
    <property type="match status" value="1"/>
</dbReference>
<dbReference type="FunFam" id="2.40.20.10:FF:000013">
    <property type="entry name" value="Plasminogen"/>
    <property type="match status" value="1"/>
</dbReference>
<dbReference type="FunFam" id="2.40.20.10:FF:000014">
    <property type="entry name" value="Plasminogen"/>
    <property type="match status" value="1"/>
</dbReference>
<dbReference type="FunFam" id="3.50.4.10:FF:000011">
    <property type="entry name" value="Plasminogen"/>
    <property type="match status" value="1"/>
</dbReference>
<dbReference type="FunFam" id="2.40.10.10:FF:000003">
    <property type="entry name" value="Transmembrane serine protease 3"/>
    <property type="match status" value="1"/>
</dbReference>
<dbReference type="Gene3D" id="3.50.4.10">
    <property type="entry name" value="Hepatocyte Growth Factor"/>
    <property type="match status" value="1"/>
</dbReference>
<dbReference type="Gene3D" id="2.40.20.10">
    <property type="entry name" value="Plasminogen Kringle 4"/>
    <property type="match status" value="4"/>
</dbReference>
<dbReference type="Gene3D" id="2.40.10.10">
    <property type="entry name" value="Trypsin-like serine proteases"/>
    <property type="match status" value="1"/>
</dbReference>
<dbReference type="InterPro" id="IPR000001">
    <property type="entry name" value="Kringle"/>
</dbReference>
<dbReference type="InterPro" id="IPR013806">
    <property type="entry name" value="Kringle-like"/>
</dbReference>
<dbReference type="InterPro" id="IPR018056">
    <property type="entry name" value="Kringle_CS"/>
</dbReference>
<dbReference type="InterPro" id="IPR038178">
    <property type="entry name" value="Kringle_sf"/>
</dbReference>
<dbReference type="InterPro" id="IPR003609">
    <property type="entry name" value="Pan_app"/>
</dbReference>
<dbReference type="InterPro" id="IPR023317">
    <property type="entry name" value="Pept_S1A_plasmin"/>
</dbReference>
<dbReference type="InterPro" id="IPR009003">
    <property type="entry name" value="Peptidase_S1_PA"/>
</dbReference>
<dbReference type="InterPro" id="IPR043504">
    <property type="entry name" value="Peptidase_S1_PA_chymotrypsin"/>
</dbReference>
<dbReference type="InterPro" id="IPR001314">
    <property type="entry name" value="Peptidase_S1A"/>
</dbReference>
<dbReference type="InterPro" id="IPR050759">
    <property type="entry name" value="Serine_protease_kringle"/>
</dbReference>
<dbReference type="InterPro" id="IPR001254">
    <property type="entry name" value="Trypsin_dom"/>
</dbReference>
<dbReference type="InterPro" id="IPR033116">
    <property type="entry name" value="TRYPSIN_SER"/>
</dbReference>
<dbReference type="PANTHER" id="PTHR24261:SF13">
    <property type="entry name" value="PLASMINOGEN"/>
    <property type="match status" value="1"/>
</dbReference>
<dbReference type="PANTHER" id="PTHR24261">
    <property type="entry name" value="PLASMINOGEN-RELATED"/>
    <property type="match status" value="1"/>
</dbReference>
<dbReference type="Pfam" id="PF00051">
    <property type="entry name" value="Kringle"/>
    <property type="match status" value="5"/>
</dbReference>
<dbReference type="Pfam" id="PF00024">
    <property type="entry name" value="PAN_1"/>
    <property type="match status" value="1"/>
</dbReference>
<dbReference type="Pfam" id="PF00089">
    <property type="entry name" value="Trypsin"/>
    <property type="match status" value="1"/>
</dbReference>
<dbReference type="PIRSF" id="PIRSF001150">
    <property type="entry name" value="Plasmin"/>
    <property type="match status" value="1"/>
</dbReference>
<dbReference type="PRINTS" id="PR00722">
    <property type="entry name" value="CHYMOTRYPSIN"/>
</dbReference>
<dbReference type="PRINTS" id="PR00018">
    <property type="entry name" value="KRINGLE"/>
</dbReference>
<dbReference type="SMART" id="SM00130">
    <property type="entry name" value="KR"/>
    <property type="match status" value="5"/>
</dbReference>
<dbReference type="SMART" id="SM00473">
    <property type="entry name" value="PAN_AP"/>
    <property type="match status" value="1"/>
</dbReference>
<dbReference type="SMART" id="SM00020">
    <property type="entry name" value="Tryp_SPc"/>
    <property type="match status" value="1"/>
</dbReference>
<dbReference type="SUPFAM" id="SSF57414">
    <property type="entry name" value="Hairpin loop containing domain-like"/>
    <property type="match status" value="1"/>
</dbReference>
<dbReference type="SUPFAM" id="SSF57440">
    <property type="entry name" value="Kringle-like"/>
    <property type="match status" value="5"/>
</dbReference>
<dbReference type="SUPFAM" id="SSF50494">
    <property type="entry name" value="Trypsin-like serine proteases"/>
    <property type="match status" value="1"/>
</dbReference>
<dbReference type="PROSITE" id="PS00021">
    <property type="entry name" value="KRINGLE_1"/>
    <property type="match status" value="5"/>
</dbReference>
<dbReference type="PROSITE" id="PS50070">
    <property type="entry name" value="KRINGLE_2"/>
    <property type="match status" value="5"/>
</dbReference>
<dbReference type="PROSITE" id="PS50948">
    <property type="entry name" value="PAN"/>
    <property type="match status" value="1"/>
</dbReference>
<dbReference type="PROSITE" id="PS50240">
    <property type="entry name" value="TRYPSIN_DOM"/>
    <property type="match status" value="1"/>
</dbReference>
<dbReference type="PROSITE" id="PS00135">
    <property type="entry name" value="TRYPSIN_SER"/>
    <property type="match status" value="1"/>
</dbReference>
<gene>
    <name type="primary">PLG</name>
</gene>
<reference key="1">
    <citation type="submission" date="2006-05" db="EMBL/GenBank/DDBJ databases">
        <authorList>
            <person name="Chen Y."/>
            <person name="Tan W."/>
            <person name="Cheng J."/>
        </authorList>
    </citation>
    <scope>NUCLEOTIDE SEQUENCE [MRNA]</scope>
    <source>
        <tissue>Liver</tissue>
    </source>
</reference>
<reference key="2">
    <citation type="journal article" date="1987" name="Fibrinolysis">
        <title>Amino acid sequence of the heavy chain of porcine plasmin. Comparison of the carbohydrate attachment sites with the human and bovine species.</title>
        <authorList>
            <person name="Schaller J."/>
            <person name="Marti T."/>
            <person name="Roesselet S.J."/>
            <person name="Kaempfer U."/>
            <person name="Rickli E.E."/>
        </authorList>
    </citation>
    <scope>PROTEIN SEQUENCE OF 20-579</scope>
</reference>
<reference key="3">
    <citation type="journal article" date="1985" name="Eur. J. Biochem.">
        <title>Determination of the complete amino-acid sequence of porcine miniplasminogen.</title>
        <authorList>
            <person name="Marti T."/>
            <person name="Schaller J."/>
            <person name="Rickli E.E."/>
        </authorList>
    </citation>
    <scope>PROTEIN SEQUENCE OF 469-809</scope>
</reference>
<reference key="4">
    <citation type="journal article" date="1988" name="Eur. J. Biochem.">
        <title>The N- and O-linked carbohydrate chains of human, bovine and porcine plasminogen. Species specificity in relation to sialylation and fucosylation patterns.</title>
        <authorList>
            <person name="Marti T."/>
            <person name="Schaller J."/>
            <person name="Rickli E.E."/>
            <person name="Schmid K."/>
            <person name="Kamerling J.P."/>
            <person name="Gerwig G.J."/>
            <person name="van Halbeek H."/>
            <person name="Vliegenthart J.F.G."/>
        </authorList>
    </citation>
    <scope>GLYCOSYLATION AT ASN-308 AND THR-268</scope>
    <scope>STRUCTURE OF CARBOHYDRATES</scope>
</reference>
<organism>
    <name type="scientific">Sus scrofa</name>
    <name type="common">Pig</name>
    <dbReference type="NCBI Taxonomy" id="9823"/>
    <lineage>
        <taxon>Eukaryota</taxon>
        <taxon>Metazoa</taxon>
        <taxon>Chordata</taxon>
        <taxon>Craniata</taxon>
        <taxon>Vertebrata</taxon>
        <taxon>Euteleostomi</taxon>
        <taxon>Mammalia</taxon>
        <taxon>Eutheria</taxon>
        <taxon>Laurasiatheria</taxon>
        <taxon>Artiodactyla</taxon>
        <taxon>Suina</taxon>
        <taxon>Suidae</taxon>
        <taxon>Sus</taxon>
    </lineage>
</organism>
<proteinExistence type="evidence at protein level"/>
<name>PLMN_PIG</name>
<evidence type="ECO:0000250" key="1"/>
<evidence type="ECO:0000250" key="2">
    <source>
        <dbReference type="UniProtKB" id="P00747"/>
    </source>
</evidence>
<evidence type="ECO:0000255" key="3">
    <source>
        <dbReference type="PROSITE-ProRule" id="PRU00121"/>
    </source>
</evidence>
<evidence type="ECO:0000255" key="4">
    <source>
        <dbReference type="PROSITE-ProRule" id="PRU00274"/>
    </source>
</evidence>
<evidence type="ECO:0000255" key="5">
    <source>
        <dbReference type="PROSITE-ProRule" id="PRU00315"/>
    </source>
</evidence>
<evidence type="ECO:0000269" key="6">
    <source>
    </source>
</evidence>
<evidence type="ECO:0000269" key="7">
    <source ref="2"/>
</evidence>
<evidence type="ECO:0000305" key="8"/>
<accession>P06867</accession>
<accession>Q19AZ9</accession>